<gene>
    <name evidence="8" type="primary">PSD1pv</name>
    <name evidence="7" type="synonym">PSD1</name>
    <name type="ORF">TGGT1_269920</name>
</gene>
<comment type="function">
    <text evidence="5">Catalyzes the formation of phosphatidylethanolamine (PtdEtn) from phosphatidylserine (PtdSer). Plays a central role in phospholipid metabolism and in the interorganelle trafficking of phosphatidylserine. Can act on liposomal and host cell PtdSer.</text>
</comment>
<comment type="catalytic activity">
    <reaction evidence="5">
        <text>a 1,2-diacyl-sn-glycero-3-phospho-L-serine + H(+) = a 1,2-diacyl-sn-glycero-3-phosphoethanolamine + CO2</text>
        <dbReference type="Rhea" id="RHEA:20828"/>
        <dbReference type="ChEBI" id="CHEBI:15378"/>
        <dbReference type="ChEBI" id="CHEBI:16526"/>
        <dbReference type="ChEBI" id="CHEBI:57262"/>
        <dbReference type="ChEBI" id="CHEBI:64612"/>
        <dbReference type="EC" id="4.1.1.65"/>
    </reaction>
</comment>
<comment type="cofactor">
    <cofactor evidence="2">
        <name>pyruvate</name>
        <dbReference type="ChEBI" id="CHEBI:15361"/>
    </cofactor>
    <text evidence="2">Binds 1 pyruvoyl group covalently per subunit.</text>
</comment>
<comment type="biophysicochemical properties">
    <kinetics>
        <KM evidence="5">67 uM for phosphatidylserine</KM>
    </kinetics>
</comment>
<comment type="pathway">
    <text evidence="3">Phospholipid metabolism; phosphatidylethanolamine biosynthesis; phosphatidylethanolamine from CDP-diacylglycerol: step 2/2.</text>
</comment>
<comment type="subunit">
    <text evidence="2">Heterodimer of a large membrane-associated beta subunit and a small pyruvoyl-containing alpha subunit.</text>
</comment>
<comment type="subcellular location">
    <subcellularLocation>
        <location evidence="5 6">Parasitophorous vacuole</location>
    </subcellularLocation>
    <subcellularLocation>
        <location evidence="5">Cytoplasmic vesicle</location>
        <location evidence="5">Secretory vesicle</location>
    </subcellularLocation>
    <text evidence="5">The protein is stored in dense granules in the parasite and secreted into the parasitophorous vacuole via these granules after host infection.</text>
</comment>
<comment type="PTM">
    <text evidence="1 2 3">Is synthesized initially as an inactive proenzyme. Formation of the active enzyme involves a self-maturation process in which the active site pyruvoyl group is generated from an internal serine residue via an autocatalytic post-translational modification. Two non-identical subunits are generated from the proenzyme in this reaction, and the pyruvate is formed at the N-terminus of the alpha chain, which is derived from the carboxyl end of the proenzyme. The autoendoproteolytic cleavage occurs by a canonical serine protease mechanism, in which the side chain hydroxyl group of the serine supplies its oxygen atom to form the C-terminus of the beta chain, while the remainder of the serine residue undergoes an oxidative deamination to produce ammonia and the pyruvoyl prosthetic group on the alpha chain (By similarity). During this reaction, the Ser that is part of the protease active site of the proenzyme becomes the pyruvoyl prosthetic group, which constitutes an essential element of the active site of the mature decarboxylase.</text>
</comment>
<comment type="similarity">
    <text evidence="9">Belongs to the phosphatidylserine decarboxylase family.</text>
</comment>
<dbReference type="EC" id="4.1.1.65"/>
<dbReference type="EMBL" id="JN003619">
    <property type="protein sequence ID" value="AEG64709.1"/>
    <property type="molecule type" value="mRNA"/>
</dbReference>
<dbReference type="EMBL" id="AAQM03000013">
    <property type="protein sequence ID" value="EPR64713.1"/>
    <property type="molecule type" value="Genomic_DNA"/>
</dbReference>
<dbReference type="EnsemblProtists" id="EPR64713">
    <property type="protein sequence ID" value="EPR64713"/>
    <property type="gene ID" value="TGGT1_269920"/>
</dbReference>
<dbReference type="VEuPathDB" id="ToxoDB:TGGT1_269920"/>
<dbReference type="HOGENOM" id="CLU_388599_0_0_1"/>
<dbReference type="OrthoDB" id="6049at5809"/>
<dbReference type="SABIO-RK" id="F6N7K6"/>
<dbReference type="UniPathway" id="UPA00558">
    <property type="reaction ID" value="UER00616"/>
</dbReference>
<dbReference type="Proteomes" id="UP000005641">
    <property type="component" value="Unassembled WGS sequence"/>
</dbReference>
<dbReference type="GO" id="GO:0005739">
    <property type="term" value="C:mitochondrion"/>
    <property type="evidence" value="ECO:0007669"/>
    <property type="project" value="TreeGrafter"/>
</dbReference>
<dbReference type="GO" id="GO:0020003">
    <property type="term" value="C:symbiont-containing vacuole"/>
    <property type="evidence" value="ECO:0007669"/>
    <property type="project" value="UniProtKB-SubCell"/>
</dbReference>
<dbReference type="GO" id="GO:0030133">
    <property type="term" value="C:transport vesicle"/>
    <property type="evidence" value="ECO:0007669"/>
    <property type="project" value="UniProtKB-SubCell"/>
</dbReference>
<dbReference type="GO" id="GO:0004609">
    <property type="term" value="F:phosphatidylserine decarboxylase activity"/>
    <property type="evidence" value="ECO:0007669"/>
    <property type="project" value="UniProtKB-EC"/>
</dbReference>
<dbReference type="GO" id="GO:0006646">
    <property type="term" value="P:phosphatidylethanolamine biosynthetic process"/>
    <property type="evidence" value="ECO:0007669"/>
    <property type="project" value="UniProtKB-UniPathway"/>
</dbReference>
<dbReference type="InterPro" id="IPR003817">
    <property type="entry name" value="PS_Dcarbxylase"/>
</dbReference>
<dbReference type="InterPro" id="IPR033177">
    <property type="entry name" value="PSD-B"/>
</dbReference>
<dbReference type="NCBIfam" id="TIGR00163">
    <property type="entry name" value="PS_decarb"/>
    <property type="match status" value="1"/>
</dbReference>
<dbReference type="PANTHER" id="PTHR10067">
    <property type="entry name" value="PHOSPHATIDYLSERINE DECARBOXYLASE"/>
    <property type="match status" value="1"/>
</dbReference>
<dbReference type="PANTHER" id="PTHR10067:SF6">
    <property type="entry name" value="PHOSPHATIDYLSERINE DECARBOXYLASE PROENZYME, MITOCHONDRIAL"/>
    <property type="match status" value="1"/>
</dbReference>
<dbReference type="Pfam" id="PF02666">
    <property type="entry name" value="PS_Dcarbxylase"/>
    <property type="match status" value="1"/>
</dbReference>
<protein>
    <recommendedName>
        <fullName evidence="7">Phosphatidylserine decarboxylase 2 proenzyme</fullName>
        <ecNumber>4.1.1.65</ecNumber>
    </recommendedName>
    <alternativeName>
        <fullName evidence="8">Phosphatidylserine decarboxylase 1, parasitophorous vacuolar</fullName>
    </alternativeName>
    <component>
        <recommendedName>
            <fullName evidence="10">Phosphatidylserine decarboxylase 2 beta chain</fullName>
        </recommendedName>
    </component>
    <component>
        <recommendedName>
            <fullName evidence="10">Phosphatidylserine decarboxylase 2 alpha chain</fullName>
        </recommendedName>
    </component>
</protein>
<name>PSD2_TOXGG</name>
<feature type="signal peptide" evidence="4">
    <location>
        <begin position="1"/>
        <end position="25"/>
    </location>
</feature>
<feature type="chain" id="PRO_5005677250" description="Phosphatidylserine decarboxylase 2 proenzyme">
    <location>
        <begin position="26"/>
        <end position="968"/>
    </location>
</feature>
<feature type="chain" id="PRO_0000435586" description="Phosphatidylserine decarboxylase 2 beta chain">
    <location>
        <begin position="26"/>
        <end position="682"/>
    </location>
</feature>
<feature type="chain" id="PRO_0000435587" description="Phosphatidylserine decarboxylase 2 alpha chain">
    <location>
        <begin position="683"/>
        <end position="968"/>
    </location>
</feature>
<feature type="active site" description="Charge relay system; for autoendoproteolytic cleavage activity" evidence="1">
    <location>
        <position position="500"/>
    </location>
</feature>
<feature type="active site" description="Charge relay system; for autoendoproteolytic cleavage activity" evidence="1">
    <location>
        <position position="570"/>
    </location>
</feature>
<feature type="active site" description="Charge relay system; for autoendoproteolytic cleavage activity" evidence="1">
    <location>
        <position position="683"/>
    </location>
</feature>
<feature type="active site" description="Schiff-base intermediate with substrate; via pyruvic acid; for decarboxylase activity" evidence="2">
    <location>
        <position position="683"/>
    </location>
</feature>
<feature type="site" description="Cleavage (non-hydrolytic); by autocatalysis" evidence="2">
    <location>
        <begin position="682"/>
        <end position="683"/>
    </location>
</feature>
<feature type="modified residue" description="Pyruvic acid (Ser); by autocatalysis" evidence="2">
    <location>
        <position position="683"/>
    </location>
</feature>
<sequence>MAKVMRLIIFVCVALVAISVPAASSVQSQQERIRPGFRQQLPSSIRPFSAFRRRGQEASDSVVYLNIVYLRLVGTRQCATGELTVVVHGKALNNATLGDVQTSLTRTFASSLKEPSSTLAIRRWSWKDPLFLMLTLNRRAVRTGTGLPRSTPLYQVAKQRLFVFVRKPTPTSSCRRAALDPRPLYGVPKVGVQDKYTLHVSMDVLGMSLREPLEHQEEEPGPASVSTYAAAQAILDGASSFGIGAFGSAKPNLKQISMYASGAELEKQVYTPTTSQLALFLPSKTFFGVEVTSVSDGTFRIPVSASRLVPFSAMSYMCTGSQTHKLTQTGMNVLEKRVHGKENPPSEGAEVLLNLLAARKPVNGVFEQDPTVVLLQLWRTPEGSESWQETPLMWEFPDTLEAIEDAGEYRSGILSSIAANTRIIGKMAGWLASRSFSRRFIRTLIRLNNIDLEEAFSMSDKDRRHSAADFRSVQEFFTRPINYHVYRDMDPRASIMAPADSLIQNIYTIRPDFKGEISHPIIPQVKSTSFNLREFLYGARQVPPLQLQSPSNRLFVSILYLAPSDYHRVHSPADWRVTSQTYIPGCTPSVSRRNLEAGDLLHRYERTALIGHWDPEKNGQQLFFSVTMVAAMFVGGLRLSWEEEPLGASMRLGRCTRYTESYEKQVDVELCASQEIGAFRFGSTVVMIFEAPEDFDMTSVGQCSHVAAGQPAGYLGQGRERPLQERCNAFRGNFESPFHFWKHLQKTSSVDDILKQNTLAPRAWRQEPGRVWAEVLRATERGLLYGFALSHYLLKRWATENGNLGELVLGQPEVLRQNINGSDSVIREGFRCFAAKDKKQIRLQMSGRQSQVSLTATVTPDEQFLFQHPFYGCVGDEKLGKLVRGIDATWILLPERAVLLTLKVSTGSKQEDGRVLRVATTKIEVQTEPCQGGWEESRVGTTSTTCAIRTVEKREESISEGVLTNGDL</sequence>
<evidence type="ECO:0000250" key="1">
    <source>
        <dbReference type="UniProtKB" id="B3L2V1"/>
    </source>
</evidence>
<evidence type="ECO:0000250" key="2">
    <source>
        <dbReference type="UniProtKB" id="P0A8K1"/>
    </source>
</evidence>
<evidence type="ECO:0000250" key="3">
    <source>
        <dbReference type="UniProtKB" id="P39006"/>
    </source>
</evidence>
<evidence type="ECO:0000255" key="4"/>
<evidence type="ECO:0000269" key="5">
    <source>
    </source>
</evidence>
<evidence type="ECO:0000269" key="6">
    <source>
    </source>
</evidence>
<evidence type="ECO:0000303" key="7">
    <source>
    </source>
</evidence>
<evidence type="ECO:0000303" key="8">
    <source>
    </source>
</evidence>
<evidence type="ECO:0000305" key="9"/>
<evidence type="ECO:0000305" key="10">
    <source>
    </source>
</evidence>
<keyword id="KW-0968">Cytoplasmic vesicle</keyword>
<keyword id="KW-0210">Decarboxylase</keyword>
<keyword id="KW-0444">Lipid biosynthesis</keyword>
<keyword id="KW-0443">Lipid metabolism</keyword>
<keyword id="KW-0456">Lyase</keyword>
<keyword id="KW-0594">Phospholipid biosynthesis</keyword>
<keyword id="KW-1208">Phospholipid metabolism</keyword>
<keyword id="KW-0670">Pyruvate</keyword>
<keyword id="KW-0732">Signal</keyword>
<keyword id="KW-0865">Zymogen</keyword>
<reference key="1">
    <citation type="journal article" date="2012" name="J. Biol. Chem.">
        <title>The obligate intracellular parasite Toxoplasma gondii secretes a soluble phosphatidylserine decarboxylase.</title>
        <authorList>
            <person name="Gupta N."/>
            <person name="Hartmann A."/>
            <person name="Lucius R."/>
            <person name="Voelker D.R."/>
        </authorList>
    </citation>
    <scope>NUCLEOTIDE SEQUENCE [MRNA]</scope>
    <scope>FUNCTION</scope>
    <scope>CATALYTIC ACTIVITY</scope>
    <scope>BIOPHYSICOCHEMICAL PROPERTIES</scope>
    <scope>SUBCELLULAR LOCATION</scope>
    <source>
        <strain>ATCC 50853 / GT1</strain>
    </source>
</reference>
<reference key="2">
    <citation type="submission" date="2013-05" db="EMBL/GenBank/DDBJ databases">
        <authorList>
            <person name="Sibley D."/>
            <person name="Venepally P."/>
            <person name="Karamycheva S."/>
            <person name="Hadjithomas M."/>
            <person name="Khan A."/>
            <person name="Brunk B."/>
            <person name="Roos D."/>
            <person name="Caler E."/>
            <person name="Lorenzi H."/>
        </authorList>
    </citation>
    <scope>NUCLEOTIDE SEQUENCE [LARGE SCALE GENOMIC DNA]</scope>
    <source>
        <strain>ATCC 50853 / GT1</strain>
    </source>
</reference>
<reference key="3">
    <citation type="journal article" date="2014" name="J. Biol. Chem.">
        <title>Phosphatidylethanolamine synthesis in the parasite mitochondrion is required for efficient growth but dispensable for survival of Toxoplasma gondii.</title>
        <authorList>
            <person name="Hartmann A."/>
            <person name="Hellmund M."/>
            <person name="Lucius R."/>
            <person name="Voelker D.R."/>
            <person name="Gupta N."/>
        </authorList>
    </citation>
    <scope>SUBCELLULAR LOCATION</scope>
</reference>
<accession>F6N7K6</accession>
<accession>S7WKF9</accession>
<organism>
    <name type="scientific">Toxoplasma gondii (strain ATCC 50853 / GT1)</name>
    <dbReference type="NCBI Taxonomy" id="507601"/>
    <lineage>
        <taxon>Eukaryota</taxon>
        <taxon>Sar</taxon>
        <taxon>Alveolata</taxon>
        <taxon>Apicomplexa</taxon>
        <taxon>Conoidasida</taxon>
        <taxon>Coccidia</taxon>
        <taxon>Eucoccidiorida</taxon>
        <taxon>Eimeriorina</taxon>
        <taxon>Sarcocystidae</taxon>
        <taxon>Toxoplasma</taxon>
    </lineage>
</organism>
<proteinExistence type="evidence at protein level"/>